<organism>
    <name type="scientific">Caenorhabditis elegans</name>
    <dbReference type="NCBI Taxonomy" id="6239"/>
    <lineage>
        <taxon>Eukaryota</taxon>
        <taxon>Metazoa</taxon>
        <taxon>Ecdysozoa</taxon>
        <taxon>Nematoda</taxon>
        <taxon>Chromadorea</taxon>
        <taxon>Rhabditida</taxon>
        <taxon>Rhabditina</taxon>
        <taxon>Rhabditomorpha</taxon>
        <taxon>Rhabditoidea</taxon>
        <taxon>Rhabditidae</taxon>
        <taxon>Peloderinae</taxon>
        <taxon>Caenorhabditis</taxon>
    </lineage>
</organism>
<protein>
    <recommendedName>
        <fullName evidence="3">Small ribosomal subunit protein uS9</fullName>
    </recommendedName>
    <alternativeName>
        <fullName>40S ribosomal protein S16</fullName>
    </alternativeName>
</protein>
<proteinExistence type="evidence at protein level"/>
<keyword id="KW-0002">3D-structure</keyword>
<keyword id="KW-0007">Acetylation</keyword>
<keyword id="KW-0903">Direct protein sequencing</keyword>
<keyword id="KW-1185">Reference proteome</keyword>
<keyword id="KW-0687">Ribonucleoprotein</keyword>
<keyword id="KW-0689">Ribosomal protein</keyword>
<reference key="1">
    <citation type="journal article" date="1998" name="Science">
        <title>Genome sequence of the nematode C. elegans: a platform for investigating biology.</title>
        <authorList>
            <consortium name="The C. elegans sequencing consortium"/>
        </authorList>
    </citation>
    <scope>NUCLEOTIDE SEQUENCE [LARGE SCALE GENOMIC DNA]</scope>
    <source>
        <strain>Bristol N2</strain>
    </source>
</reference>
<reference key="2">
    <citation type="submission" date="2005-09" db="UniProtKB">
        <authorList>
            <person name="Bienvenut W.V."/>
        </authorList>
    </citation>
    <scope>PROTEIN SEQUENCE OF 2-13; 49-58 AND 61-67</scope>
    <scope>IDENTIFICATION BY MASS SPECTROMETRY</scope>
    <scope>ACETYLATION AT THR-2</scope>
</reference>
<accession>Q22054</accession>
<name>RS16_CAEEL</name>
<dbReference type="EMBL" id="Z78413">
    <property type="protein sequence ID" value="CAB01658.1"/>
    <property type="molecule type" value="Genomic_DNA"/>
</dbReference>
<dbReference type="PIR" id="T24280">
    <property type="entry name" value="T24280"/>
</dbReference>
<dbReference type="RefSeq" id="NP_001379167.1">
    <property type="nucleotide sequence ID" value="NM_001392664.1"/>
</dbReference>
<dbReference type="RefSeq" id="NP_506690.1">
    <property type="nucleotide sequence ID" value="NM_074289.5"/>
</dbReference>
<dbReference type="PDB" id="9BH5">
    <property type="method" value="EM"/>
    <property type="resolution" value="2.63 A"/>
    <property type="chains" value="AQ=1-144"/>
</dbReference>
<dbReference type="PDB" id="9CAI">
    <property type="method" value="EM"/>
    <property type="resolution" value="2.59 A"/>
    <property type="chains" value="AQ=1-144"/>
</dbReference>
<dbReference type="PDBsum" id="9BH5"/>
<dbReference type="PDBsum" id="9CAI"/>
<dbReference type="EMDB" id="EMD-44533"/>
<dbReference type="EMDB" id="EMD-45392"/>
<dbReference type="SMR" id="Q22054"/>
<dbReference type="BioGRID" id="44994">
    <property type="interactions" value="93"/>
</dbReference>
<dbReference type="FunCoup" id="Q22054">
    <property type="interactions" value="914"/>
</dbReference>
<dbReference type="IntAct" id="Q22054">
    <property type="interactions" value="1"/>
</dbReference>
<dbReference type="STRING" id="6239.T01C3.6.1"/>
<dbReference type="PaxDb" id="6239-T01C3.6.1"/>
<dbReference type="PeptideAtlas" id="Q22054"/>
<dbReference type="EnsemblMetazoa" id="T01C3.6.1">
    <property type="protein sequence ID" value="T01C3.6.1"/>
    <property type="gene ID" value="WBGene00004485"/>
</dbReference>
<dbReference type="GeneID" id="179998"/>
<dbReference type="UCSC" id="T01C3.6.2">
    <property type="organism name" value="c. elegans"/>
</dbReference>
<dbReference type="AGR" id="WB:WBGene00004485"/>
<dbReference type="WormBase" id="T01C3.6">
    <property type="protein sequence ID" value="CE12918"/>
    <property type="gene ID" value="WBGene00004485"/>
    <property type="gene designation" value="rps-16"/>
</dbReference>
<dbReference type="eggNOG" id="KOG1753">
    <property type="taxonomic scope" value="Eukaryota"/>
</dbReference>
<dbReference type="GeneTree" id="ENSGT00390000013067"/>
<dbReference type="HOGENOM" id="CLU_046483_4_0_1"/>
<dbReference type="InParanoid" id="Q22054"/>
<dbReference type="OMA" id="AHCKKGQ"/>
<dbReference type="OrthoDB" id="426865at2759"/>
<dbReference type="PhylomeDB" id="Q22054"/>
<dbReference type="Reactome" id="R-CEL-156827">
    <property type="pathway name" value="L13a-mediated translational silencing of Ceruloplasmin expression"/>
</dbReference>
<dbReference type="Reactome" id="R-CEL-1799339">
    <property type="pathway name" value="SRP-dependent cotranslational protein targeting to membrane"/>
</dbReference>
<dbReference type="Reactome" id="R-CEL-72649">
    <property type="pathway name" value="Translation initiation complex formation"/>
</dbReference>
<dbReference type="Reactome" id="R-CEL-72689">
    <property type="pathway name" value="Formation of a pool of free 40S subunits"/>
</dbReference>
<dbReference type="Reactome" id="R-CEL-72695">
    <property type="pathway name" value="Formation of the ternary complex, and subsequently, the 43S complex"/>
</dbReference>
<dbReference type="Reactome" id="R-CEL-72702">
    <property type="pathway name" value="Ribosomal scanning and start codon recognition"/>
</dbReference>
<dbReference type="Reactome" id="R-CEL-72706">
    <property type="pathway name" value="GTP hydrolysis and joining of the 60S ribosomal subunit"/>
</dbReference>
<dbReference type="Reactome" id="R-CEL-975956">
    <property type="pathway name" value="Nonsense Mediated Decay (NMD) independent of the Exon Junction Complex (EJC)"/>
</dbReference>
<dbReference type="Reactome" id="R-CEL-975957">
    <property type="pathway name" value="Nonsense Mediated Decay (NMD) enhanced by the Exon Junction Complex (EJC)"/>
</dbReference>
<dbReference type="PRO" id="PR:Q22054"/>
<dbReference type="Proteomes" id="UP000001940">
    <property type="component" value="Chromosome V"/>
</dbReference>
<dbReference type="Bgee" id="WBGene00004485">
    <property type="expression patterns" value="Expressed in germ line (C elegans) and 4 other cell types or tissues"/>
</dbReference>
<dbReference type="GO" id="GO:0022627">
    <property type="term" value="C:cytosolic small ribosomal subunit"/>
    <property type="evidence" value="ECO:0000318"/>
    <property type="project" value="GO_Central"/>
</dbReference>
<dbReference type="GO" id="GO:0003723">
    <property type="term" value="F:RNA binding"/>
    <property type="evidence" value="ECO:0000318"/>
    <property type="project" value="GO_Central"/>
</dbReference>
<dbReference type="GO" id="GO:0003735">
    <property type="term" value="F:structural constituent of ribosome"/>
    <property type="evidence" value="ECO:0000318"/>
    <property type="project" value="GO_Central"/>
</dbReference>
<dbReference type="GO" id="GO:0000462">
    <property type="term" value="P:maturation of SSU-rRNA from tricistronic rRNA transcript (SSU-rRNA, 5.8S rRNA, LSU-rRNA)"/>
    <property type="evidence" value="ECO:0000318"/>
    <property type="project" value="GO_Central"/>
</dbReference>
<dbReference type="GO" id="GO:0006412">
    <property type="term" value="P:translation"/>
    <property type="evidence" value="ECO:0007669"/>
    <property type="project" value="InterPro"/>
</dbReference>
<dbReference type="FunFam" id="3.30.230.10:FF:000007">
    <property type="entry name" value="40S ribosomal protein S16"/>
    <property type="match status" value="1"/>
</dbReference>
<dbReference type="Gene3D" id="3.30.230.10">
    <property type="match status" value="1"/>
</dbReference>
<dbReference type="InterPro" id="IPR020568">
    <property type="entry name" value="Ribosomal_Su5_D2-typ_SF"/>
</dbReference>
<dbReference type="InterPro" id="IPR000754">
    <property type="entry name" value="Ribosomal_uS9"/>
</dbReference>
<dbReference type="InterPro" id="IPR020574">
    <property type="entry name" value="Ribosomal_uS9_CS"/>
</dbReference>
<dbReference type="InterPro" id="IPR014721">
    <property type="entry name" value="Ribsml_uS5_D2-typ_fold_subgr"/>
</dbReference>
<dbReference type="NCBIfam" id="NF001749">
    <property type="entry name" value="PRK00474.1"/>
    <property type="match status" value="1"/>
</dbReference>
<dbReference type="PANTHER" id="PTHR21569:SF16">
    <property type="entry name" value="RIBOSOMAL PROTEIN S16"/>
    <property type="match status" value="1"/>
</dbReference>
<dbReference type="PANTHER" id="PTHR21569">
    <property type="entry name" value="RIBOSOMAL PROTEIN S9"/>
    <property type="match status" value="1"/>
</dbReference>
<dbReference type="Pfam" id="PF00380">
    <property type="entry name" value="Ribosomal_S9"/>
    <property type="match status" value="1"/>
</dbReference>
<dbReference type="SUPFAM" id="SSF54211">
    <property type="entry name" value="Ribosomal protein S5 domain 2-like"/>
    <property type="match status" value="1"/>
</dbReference>
<dbReference type="PROSITE" id="PS00360">
    <property type="entry name" value="RIBOSOMAL_S9"/>
    <property type="match status" value="1"/>
</dbReference>
<sequence length="144" mass="16316">MTSTVQSVQTFGRKKTATAVAHCKKGQGLIKVNGRPLEFLEPQILRIKLQEPLLLVGKERFQDVDIRIRVSGGGHVAQIYAVRQALAKALVAYYHKYVDEQSKRELKNIFAAYDKSLLVADPRRRESKKFGGPGARARYQKSYR</sequence>
<feature type="initiator methionine" description="Removed" evidence="2">
    <location>
        <position position="1"/>
    </location>
</feature>
<feature type="chain" id="PRO_0000111488" description="Small ribosomal subunit protein uS9">
    <location>
        <begin position="2"/>
        <end position="144"/>
    </location>
</feature>
<feature type="region of interest" description="Disordered" evidence="1">
    <location>
        <begin position="124"/>
        <end position="144"/>
    </location>
</feature>
<feature type="modified residue" description="N-acetylthreonine" evidence="2">
    <location>
        <position position="2"/>
    </location>
</feature>
<gene>
    <name type="primary">rps-16</name>
    <name type="ORF">T01C3.6</name>
</gene>
<comment type="interaction">
    <interactant intactId="EBI-3844009">
        <id>Q22054</id>
    </interactant>
    <interactant intactId="EBI-3843983">
        <id>Q11184</id>
        <label>let-756</label>
    </interactant>
    <organismsDiffer>false</organismsDiffer>
    <experiments>4</experiments>
</comment>
<comment type="similarity">
    <text evidence="3">Belongs to the universal ribosomal protein uS9 family.</text>
</comment>
<evidence type="ECO:0000256" key="1">
    <source>
        <dbReference type="SAM" id="MobiDB-lite"/>
    </source>
</evidence>
<evidence type="ECO:0000269" key="2">
    <source ref="2"/>
</evidence>
<evidence type="ECO:0000305" key="3"/>